<comment type="function">
    <text evidence="2">Involved in the biosynthesis of the siderophore enterobactin (enterochelin), which is a macrocyclic trimeric lactone of N-(2,3-dihydroxybenzoyl)-serine. The serine trilactone serves as a scaffolding for the three catechol functionalities that provide hexadentate coordination for the tightly ligated iron(2+) atoms. Plays an essential role in the assembly of the enterobactin by catalyzing the transfer of the 4'-phosphopantetheine (Ppant) moiety from coenzyme A to the apo-domains of both EntB (ArCP domain) and EntF (PCP domain) to yield their holo-forms which make them competent for the activation of 2,3-dihydroxybenzoate (DHB) and L-serine, respectively.</text>
</comment>
<comment type="catalytic activity">
    <reaction evidence="2">
        <text>apo-[aryl-carrier protein] + CoA = holo-[aryl-carrier protein] + adenosine 3',5'-bisphosphate + H(+)</text>
        <dbReference type="Rhea" id="RHEA:48404"/>
        <dbReference type="Rhea" id="RHEA-COMP:15903"/>
        <dbReference type="Rhea" id="RHEA-COMP:17557"/>
        <dbReference type="ChEBI" id="CHEBI:15378"/>
        <dbReference type="ChEBI" id="CHEBI:29999"/>
        <dbReference type="ChEBI" id="CHEBI:57287"/>
        <dbReference type="ChEBI" id="CHEBI:58343"/>
        <dbReference type="ChEBI" id="CHEBI:64479"/>
    </reaction>
</comment>
<comment type="catalytic activity">
    <reaction evidence="2">
        <text>apo-[peptidyl-carrier protein] + CoA = holo-[peptidyl-carrier protein] + adenosine 3',5'-bisphosphate + H(+)</text>
        <dbReference type="Rhea" id="RHEA:46228"/>
        <dbReference type="Rhea" id="RHEA-COMP:11479"/>
        <dbReference type="Rhea" id="RHEA-COMP:11480"/>
        <dbReference type="ChEBI" id="CHEBI:15378"/>
        <dbReference type="ChEBI" id="CHEBI:29999"/>
        <dbReference type="ChEBI" id="CHEBI:57287"/>
        <dbReference type="ChEBI" id="CHEBI:58343"/>
        <dbReference type="ChEBI" id="CHEBI:64479"/>
    </reaction>
</comment>
<comment type="cofactor">
    <cofactor evidence="3">
        <name>Mg(2+)</name>
        <dbReference type="ChEBI" id="CHEBI:18420"/>
    </cofactor>
</comment>
<comment type="pathway">
    <text evidence="2">Siderophore biosynthesis; enterobactin biosynthesis.</text>
</comment>
<comment type="subunit">
    <text evidence="2">EntB, EntD, EntE, and EntF form a multienzyme complex called enterobactin synthase.</text>
</comment>
<comment type="subcellular location">
    <subcellularLocation>
        <location evidence="2">Membrane</location>
    </subcellularLocation>
</comment>
<comment type="similarity">
    <text evidence="2">Belongs to the P-Pant transferase superfamily. EntD family.</text>
</comment>
<accession>Q56064</accession>
<feature type="chain" id="PRO_0000206073" description="Enterobactin synthase component D">
    <location>
        <begin position="1"/>
        <end position="234"/>
    </location>
</feature>
<feature type="binding site" evidence="1">
    <location>
        <position position="107"/>
    </location>
    <ligand>
        <name>Mg(2+)</name>
        <dbReference type="ChEBI" id="CHEBI:18420"/>
    </ligand>
</feature>
<feature type="binding site" evidence="1">
    <location>
        <position position="109"/>
    </location>
    <ligand>
        <name>Mg(2+)</name>
        <dbReference type="ChEBI" id="CHEBI:18420"/>
    </ligand>
</feature>
<feature type="binding site" evidence="1">
    <location>
        <position position="152"/>
    </location>
    <ligand>
        <name>Mg(2+)</name>
        <dbReference type="ChEBI" id="CHEBI:18420"/>
    </ligand>
</feature>
<feature type="sequence conflict" description="In Ref. 1; AAA97937." evidence="4" ref="1">
    <original>EVGVRT</original>
    <variation>RWASG</variation>
    <location>
        <begin position="63"/>
        <end position="68"/>
    </location>
</feature>
<feature type="sequence conflict" description="In Ref. 1; AAA97937." evidence="4" ref="1">
    <original>M</original>
    <variation>I</variation>
    <location>
        <position position="72"/>
    </location>
</feature>
<feature type="sequence conflict" description="In Ref. 1; AAA97937." evidence="4" ref="1">
    <original>PS</original>
    <variation>V</variation>
    <location>
        <begin position="122"/>
        <end position="123"/>
    </location>
</feature>
<feature type="sequence conflict" description="In Ref. 1; AAA97937." evidence="4" ref="1">
    <original>ER</original>
    <variation>DA</variation>
    <location>
        <begin position="129"/>
        <end position="130"/>
    </location>
</feature>
<feature type="sequence conflict" description="In Ref. 1; AAA97937." evidence="4" ref="1">
    <original>SDRVTLPGFNSAKVTSLTATHISLHLL</original>
    <variation>QTASRSRDSIAQKLPRLPPRTSRYICW</variation>
    <location>
        <begin position="159"/>
        <end position="185"/>
    </location>
</feature>
<organism>
    <name type="scientific">Salmonella typhimurium (strain LT2 / SGSC1412 / ATCC 700720)</name>
    <dbReference type="NCBI Taxonomy" id="99287"/>
    <lineage>
        <taxon>Bacteria</taxon>
        <taxon>Pseudomonadati</taxon>
        <taxon>Pseudomonadota</taxon>
        <taxon>Gammaproteobacteria</taxon>
        <taxon>Enterobacterales</taxon>
        <taxon>Enterobacteriaceae</taxon>
        <taxon>Salmonella</taxon>
    </lineage>
</organism>
<gene>
    <name evidence="2" type="primary">entD</name>
    <name type="ordered locus">STM0584</name>
</gene>
<proteinExistence type="inferred from homology"/>
<dbReference type="EC" id="2.7.8.-" evidence="2"/>
<dbReference type="EMBL" id="U52686">
    <property type="protein sequence ID" value="AAA97937.1"/>
    <property type="molecule type" value="Genomic_DNA"/>
</dbReference>
<dbReference type="EMBL" id="AE006468">
    <property type="protein sequence ID" value="AAL19535.1"/>
    <property type="molecule type" value="Genomic_DNA"/>
</dbReference>
<dbReference type="RefSeq" id="NP_459576.1">
    <property type="nucleotide sequence ID" value="NC_003197.2"/>
</dbReference>
<dbReference type="RefSeq" id="WP_000958064.1">
    <property type="nucleotide sequence ID" value="NC_003197.2"/>
</dbReference>
<dbReference type="SMR" id="Q56064"/>
<dbReference type="STRING" id="99287.STM0584"/>
<dbReference type="PaxDb" id="99287-STM0584"/>
<dbReference type="GeneID" id="1252104"/>
<dbReference type="KEGG" id="stm:STM0584"/>
<dbReference type="PATRIC" id="fig|99287.12.peg.616"/>
<dbReference type="HOGENOM" id="CLU_075076_1_0_6"/>
<dbReference type="OMA" id="WFGSISH"/>
<dbReference type="PhylomeDB" id="Q56064"/>
<dbReference type="BioCyc" id="SENT99287:STM0584-MONOMER"/>
<dbReference type="UniPathway" id="UPA00017"/>
<dbReference type="Proteomes" id="UP000001014">
    <property type="component" value="Chromosome"/>
</dbReference>
<dbReference type="GO" id="GO:0009366">
    <property type="term" value="C:enterobactin synthetase complex"/>
    <property type="evidence" value="ECO:0000250"/>
    <property type="project" value="UniProtKB"/>
</dbReference>
<dbReference type="GO" id="GO:0005886">
    <property type="term" value="C:plasma membrane"/>
    <property type="evidence" value="ECO:0000250"/>
    <property type="project" value="UniProtKB"/>
</dbReference>
<dbReference type="GO" id="GO:0008897">
    <property type="term" value="F:holo-[acyl-carrier-protein] synthase activity"/>
    <property type="evidence" value="ECO:0000250"/>
    <property type="project" value="UniProtKB"/>
</dbReference>
<dbReference type="GO" id="GO:0000287">
    <property type="term" value="F:magnesium ion binding"/>
    <property type="evidence" value="ECO:0007669"/>
    <property type="project" value="InterPro"/>
</dbReference>
<dbReference type="GO" id="GO:0009239">
    <property type="term" value="P:enterobactin biosynthetic process"/>
    <property type="evidence" value="ECO:0000250"/>
    <property type="project" value="UniProtKB"/>
</dbReference>
<dbReference type="GO" id="GO:0009237">
    <property type="term" value="P:siderophore metabolic process"/>
    <property type="evidence" value="ECO:0000318"/>
    <property type="project" value="GO_Central"/>
</dbReference>
<dbReference type="FunFam" id="3.90.470.20:FF:000012">
    <property type="entry name" value="Enterobactin synthase component D"/>
    <property type="match status" value="1"/>
</dbReference>
<dbReference type="Gene3D" id="3.90.470.20">
    <property type="entry name" value="4'-phosphopantetheinyl transferase domain"/>
    <property type="match status" value="1"/>
</dbReference>
<dbReference type="InterPro" id="IPR008278">
    <property type="entry name" value="4-PPantetheinyl_Trfase_dom"/>
</dbReference>
<dbReference type="InterPro" id="IPR037143">
    <property type="entry name" value="4-PPantetheinyl_Trfase_dom_sf"/>
</dbReference>
<dbReference type="InterPro" id="IPR041354">
    <property type="entry name" value="4PPT_N"/>
</dbReference>
<dbReference type="InterPro" id="IPR003542">
    <property type="entry name" value="Enbac_synth_compD-like"/>
</dbReference>
<dbReference type="NCBIfam" id="NF007604">
    <property type="entry name" value="PRK10251.1"/>
    <property type="match status" value="1"/>
</dbReference>
<dbReference type="PANTHER" id="PTHR38096">
    <property type="entry name" value="ENTEROBACTIN SYNTHASE COMPONENT D"/>
    <property type="match status" value="1"/>
</dbReference>
<dbReference type="PANTHER" id="PTHR38096:SF1">
    <property type="entry name" value="ENTEROBACTIN SYNTHASE COMPONENT D"/>
    <property type="match status" value="1"/>
</dbReference>
<dbReference type="Pfam" id="PF17837">
    <property type="entry name" value="4PPT_N"/>
    <property type="match status" value="1"/>
</dbReference>
<dbReference type="Pfam" id="PF01648">
    <property type="entry name" value="ACPS"/>
    <property type="match status" value="1"/>
</dbReference>
<dbReference type="PRINTS" id="PR01399">
    <property type="entry name" value="ENTSNTHTASED"/>
</dbReference>
<dbReference type="SUPFAM" id="SSF56214">
    <property type="entry name" value="4'-phosphopantetheinyl transferase"/>
    <property type="match status" value="1"/>
</dbReference>
<evidence type="ECO:0000250" key="1"/>
<evidence type="ECO:0000250" key="2">
    <source>
        <dbReference type="UniProtKB" id="P19925"/>
    </source>
</evidence>
<evidence type="ECO:0000250" key="3">
    <source>
        <dbReference type="UniProtKB" id="P24224"/>
    </source>
</evidence>
<evidence type="ECO:0000305" key="4"/>
<name>ENTD_SALTY</name>
<reference key="1">
    <citation type="submission" date="1996-04" db="EMBL/GenBank/DDBJ databases">
        <authorList>
            <person name="Johansen K.A."/>
        </authorList>
    </citation>
    <scope>NUCLEOTIDE SEQUENCE [GENOMIC DNA]</scope>
    <source>
        <strain>LT2</strain>
    </source>
</reference>
<reference key="2">
    <citation type="journal article" date="2001" name="Nature">
        <title>Complete genome sequence of Salmonella enterica serovar Typhimurium LT2.</title>
        <authorList>
            <person name="McClelland M."/>
            <person name="Sanderson K.E."/>
            <person name="Spieth J."/>
            <person name="Clifton S.W."/>
            <person name="Latreille P."/>
            <person name="Courtney L."/>
            <person name="Porwollik S."/>
            <person name="Ali J."/>
            <person name="Dante M."/>
            <person name="Du F."/>
            <person name="Hou S."/>
            <person name="Layman D."/>
            <person name="Leonard S."/>
            <person name="Nguyen C."/>
            <person name="Scott K."/>
            <person name="Holmes A."/>
            <person name="Grewal N."/>
            <person name="Mulvaney E."/>
            <person name="Ryan E."/>
            <person name="Sun H."/>
            <person name="Florea L."/>
            <person name="Miller W."/>
            <person name="Stoneking T."/>
            <person name="Nhan M."/>
            <person name="Waterston R."/>
            <person name="Wilson R.K."/>
        </authorList>
    </citation>
    <scope>NUCLEOTIDE SEQUENCE [LARGE SCALE GENOMIC DNA]</scope>
    <source>
        <strain>LT2 / SGSC1412 / ATCC 700720</strain>
    </source>
</reference>
<sequence>MLTSHFPLPFAGHRLHIVDFDASSFREHDLLWLPHHDRLRSAGRKRKAEHLAGRIAAVHALREVGVRTVPGMGDKRQPLWPDGLFGSISHCATTALAVISRQRIGIDIEKIMSQHTATELAPSIIDSDERQILQASLLPFPLALTLAFSAKESVYKAFSDRVTLPGFNSAKVTSLTATHISLHLLPAFAATMAERTVRTEWFQRDNSVITLVSAITRVPHDRSAPASILSAIPR</sequence>
<protein>
    <recommendedName>
        <fullName evidence="2">Enterobactin synthase component D</fullName>
    </recommendedName>
    <alternativeName>
        <fullName evidence="2">4'-phosphopantetheinyl transferase EntD</fullName>
        <ecNumber evidence="2">2.7.8.-</ecNumber>
    </alternativeName>
    <alternativeName>
        <fullName evidence="2">Enterochelin synthase D</fullName>
    </alternativeName>
</protein>
<keyword id="KW-0259">Enterobactin biosynthesis</keyword>
<keyword id="KW-0460">Magnesium</keyword>
<keyword id="KW-0472">Membrane</keyword>
<keyword id="KW-0479">Metal-binding</keyword>
<keyword id="KW-1185">Reference proteome</keyword>
<keyword id="KW-0808">Transferase</keyword>